<comment type="function">
    <text evidence="1">Plays an important role in promoting lung pathology in both primary viral infection and secondary bacterial infection. Promotes alteration of mitochondrial morphology, dissipation of mitochondrial membrane potential, and cell death. Alternatively, inhibits the production of interferon in the infected cell at the level of host mitochondrial antiviral signaling MAVS. Its level of expression differs greatly depending on which cell type is infected, in a manner that is independent of the levels of expression of other viral proteins. Monocytic cells are more affected than epithelial cells. Seems to disable virus-infected monocytes or other host innate immune cells. During early stage of infection, predisposes the mitochondria to permeability transition through interaction with host SLC25A6/ANT3 and VDAC1. These proteins participate in the formation of the permeability transition pore complex (PTPC) responsible of the release of mitochondrial products that triggers apoptosis.</text>
</comment>
<comment type="subunit">
    <text evidence="1">Oligomer. Interacts with human SLC25A6/ANT3 and VDAC1. Interacts with host MAVS.</text>
</comment>
<comment type="subcellular location">
    <subcellularLocation>
        <location evidence="1">Host mitochondrion inner membrane</location>
    </subcellularLocation>
    <subcellularLocation>
        <location evidence="1">Host nucleus</location>
    </subcellularLocation>
    <subcellularLocation>
        <location evidence="1">Host cytoplasm</location>
        <location evidence="1">Host cytosol</location>
    </subcellularLocation>
    <text evidence="1">Inner mitochondrial membrane in most cells types. Otherwise is detected in the nucleus and cytosol.</text>
</comment>
<comment type="miscellaneous">
    <text>Is not encoded in all strains, and seems to be dispensable for replication.</text>
</comment>
<comment type="similarity">
    <text evidence="1">Belongs to the influenza viruses PB1-F2 family.</text>
</comment>
<organism>
    <name type="scientific">Influenza A virus (strain A/Memphis/102/1972 H3N2)</name>
    <dbReference type="NCBI Taxonomy" id="385640"/>
    <lineage>
        <taxon>Viruses</taxon>
        <taxon>Riboviria</taxon>
        <taxon>Orthornavirae</taxon>
        <taxon>Negarnaviricota</taxon>
        <taxon>Polyploviricotina</taxon>
        <taxon>Insthoviricetes</taxon>
        <taxon>Articulavirales</taxon>
        <taxon>Orthomyxoviridae</taxon>
        <taxon>Alphainfluenzavirus</taxon>
        <taxon>Alphainfluenzavirus influenzae</taxon>
        <taxon>Influenza A virus</taxon>
    </lineage>
</organism>
<dbReference type="EMBL" id="CY002102">
    <property type="protein sequence ID" value="AAZ43392.1"/>
    <property type="molecule type" value="Genomic_RNA"/>
</dbReference>
<dbReference type="SMR" id="Q463W6"/>
<dbReference type="Proteomes" id="UP000118421">
    <property type="component" value="Genome"/>
</dbReference>
<dbReference type="GO" id="GO:0044164">
    <property type="term" value="C:host cell cytosol"/>
    <property type="evidence" value="ECO:0007669"/>
    <property type="project" value="UniProtKB-SubCell"/>
</dbReference>
<dbReference type="GO" id="GO:0044192">
    <property type="term" value="C:host cell mitochondrial inner membrane"/>
    <property type="evidence" value="ECO:0007669"/>
    <property type="project" value="UniProtKB-SubCell"/>
</dbReference>
<dbReference type="GO" id="GO:0042025">
    <property type="term" value="C:host cell nucleus"/>
    <property type="evidence" value="ECO:0007669"/>
    <property type="project" value="UniProtKB-SubCell"/>
</dbReference>
<dbReference type="GO" id="GO:0016020">
    <property type="term" value="C:membrane"/>
    <property type="evidence" value="ECO:0007669"/>
    <property type="project" value="UniProtKB-UniRule"/>
</dbReference>
<dbReference type="GO" id="GO:0052150">
    <property type="term" value="P:symbiont-mediated perturbation of host apoptosis"/>
    <property type="evidence" value="ECO:0007669"/>
    <property type="project" value="UniProtKB-KW"/>
</dbReference>
<dbReference type="GO" id="GO:0039545">
    <property type="term" value="P:symbiont-mediated suppression of host cytoplasmic pattern recognition receptor signaling pathway via inhibition of MAVS activity"/>
    <property type="evidence" value="ECO:0007669"/>
    <property type="project" value="UniProtKB-KW"/>
</dbReference>
<dbReference type="HAMAP" id="MF_04064">
    <property type="entry name" value="INFV_PB1F2"/>
    <property type="match status" value="1"/>
</dbReference>
<dbReference type="InterPro" id="IPR021045">
    <property type="entry name" value="Flu_proapoptotic_PB1-F2"/>
</dbReference>
<dbReference type="Pfam" id="PF11986">
    <property type="entry name" value="PB1-F2"/>
    <property type="match status" value="1"/>
</dbReference>
<accession>Q463W6</accession>
<evidence type="ECO:0000255" key="1">
    <source>
        <dbReference type="HAMAP-Rule" id="MF_04064"/>
    </source>
</evidence>
<evidence type="ECO:0000256" key="2">
    <source>
        <dbReference type="SAM" id="MobiDB-lite"/>
    </source>
</evidence>
<proteinExistence type="inferred from homology"/>
<name>PB1F2_I72A3</name>
<gene>
    <name evidence="1" type="primary">PB1</name>
</gene>
<reference key="1">
    <citation type="submission" date="2005-08" db="EMBL/GenBank/DDBJ databases">
        <title>The NIAID influenza genome sequencing project.</title>
        <authorList>
            <person name="Ghedin E."/>
            <person name="Spiro D."/>
            <person name="Miller N."/>
            <person name="Zaborsky J."/>
            <person name="Feldblyum T."/>
            <person name="Subbu V."/>
            <person name="Shumway M."/>
            <person name="Sparenborg J."/>
            <person name="Groveman L."/>
            <person name="Halpin R."/>
            <person name="Sitz J."/>
            <person name="Koo H."/>
            <person name="Salzberg S.L."/>
            <person name="Webster R.G."/>
            <person name="Hoffmann E."/>
            <person name="Krauss S."/>
            <person name="Naeve C."/>
            <person name="Bao Y."/>
            <person name="Bolotov P."/>
            <person name="Dernovoy D."/>
            <person name="Kiryutin B."/>
            <person name="Lipman D.J."/>
            <person name="Tatusova T."/>
        </authorList>
    </citation>
    <scope>NUCLEOTIDE SEQUENCE [GENOMIC RNA]</scope>
</reference>
<feature type="chain" id="PRO_0000278720" description="Protein PB1-F2">
    <location>
        <begin position="1"/>
        <end position="90"/>
    </location>
</feature>
<feature type="region of interest" description="Disordered" evidence="2">
    <location>
        <begin position="1"/>
        <end position="31"/>
    </location>
</feature>
<feature type="region of interest" description="Mitochondrial targeting sequence" evidence="1">
    <location>
        <begin position="65"/>
        <end position="87"/>
    </location>
</feature>
<feature type="site" description="Low pathogenicity" evidence="1">
    <location>
        <position position="66"/>
    </location>
</feature>
<keyword id="KW-0053">Apoptosis</keyword>
<keyword id="KW-1035">Host cytoplasm</keyword>
<keyword id="KW-1043">Host membrane</keyword>
<keyword id="KW-1045">Host mitochondrion</keyword>
<keyword id="KW-1046">Host mitochondrion inner membrane</keyword>
<keyword id="KW-1048">Host nucleus</keyword>
<keyword id="KW-0945">Host-virus interaction</keyword>
<keyword id="KW-1090">Inhibition of host innate immune response by virus</keyword>
<keyword id="KW-1097">Inhibition of host MAVS by virus</keyword>
<keyword id="KW-1113">Inhibition of host RLR pathway by virus</keyword>
<keyword id="KW-0472">Membrane</keyword>
<keyword id="KW-1119">Modulation of host cell apoptosis by virus</keyword>
<keyword id="KW-0899">Viral immunoevasion</keyword>
<protein>
    <recommendedName>
        <fullName evidence="1">Protein PB1-F2</fullName>
    </recommendedName>
</protein>
<sequence length="90" mass="10693">MEQEQDTPWTQSTEHINIQKKGSGQQTQRLGRPNLTQLMDHYLRIMSQVDMHKQTVSWKQWPSLKNPTQGSLKTRALKRWKSFNKQGWTN</sequence>
<organismHost>
    <name type="scientific">Aves</name>
    <dbReference type="NCBI Taxonomy" id="8782"/>
</organismHost>
<organismHost>
    <name type="scientific">Cetacea</name>
    <name type="common">whales</name>
    <dbReference type="NCBI Taxonomy" id="9721"/>
</organismHost>
<organismHost>
    <name type="scientific">Homo sapiens</name>
    <name type="common">Human</name>
    <dbReference type="NCBI Taxonomy" id="9606"/>
</organismHost>
<organismHost>
    <name type="scientific">Phocidae</name>
    <name type="common">true seals</name>
    <dbReference type="NCBI Taxonomy" id="9709"/>
</organismHost>
<organismHost>
    <name type="scientific">Sus scrofa</name>
    <name type="common">Pig</name>
    <dbReference type="NCBI Taxonomy" id="9823"/>
</organismHost>